<gene>
    <name type="ordered locus">lp_2358</name>
</gene>
<evidence type="ECO:0000255" key="1">
    <source>
        <dbReference type="HAMAP-Rule" id="MF_00386"/>
    </source>
</evidence>
<evidence type="ECO:0000256" key="2">
    <source>
        <dbReference type="SAM" id="MobiDB-lite"/>
    </source>
</evidence>
<accession>Q88UU8</accession>
<accession>F9UQQ8</accession>
<dbReference type="EMBL" id="AL935263">
    <property type="protein sequence ID" value="CCC79547.1"/>
    <property type="molecule type" value="Genomic_DNA"/>
</dbReference>
<dbReference type="RefSeq" id="YP_004890061.1">
    <property type="nucleotide sequence ID" value="NC_004567.2"/>
</dbReference>
<dbReference type="STRING" id="220668.lp_2358"/>
<dbReference type="EnsemblBacteria" id="CCC79547">
    <property type="protein sequence ID" value="CCC79547"/>
    <property type="gene ID" value="lp_2358"/>
</dbReference>
<dbReference type="KEGG" id="lpl:lp_2358"/>
<dbReference type="PATRIC" id="fig|220668.9.peg.1992"/>
<dbReference type="eggNOG" id="COG0759">
    <property type="taxonomic scope" value="Bacteria"/>
</dbReference>
<dbReference type="HOGENOM" id="CLU_144811_5_2_9"/>
<dbReference type="OrthoDB" id="9801753at2"/>
<dbReference type="PhylomeDB" id="Q88UU8"/>
<dbReference type="Proteomes" id="UP000000432">
    <property type="component" value="Chromosome"/>
</dbReference>
<dbReference type="GO" id="GO:0005886">
    <property type="term" value="C:plasma membrane"/>
    <property type="evidence" value="ECO:0007669"/>
    <property type="project" value="UniProtKB-SubCell"/>
</dbReference>
<dbReference type="HAMAP" id="MF_00386">
    <property type="entry name" value="UPF0161_YidD"/>
    <property type="match status" value="1"/>
</dbReference>
<dbReference type="InterPro" id="IPR002696">
    <property type="entry name" value="Membr_insert_effic_factor_YidD"/>
</dbReference>
<dbReference type="NCBIfam" id="TIGR00278">
    <property type="entry name" value="membrane protein insertion efficiency factor YidD"/>
    <property type="match status" value="1"/>
</dbReference>
<dbReference type="PANTHER" id="PTHR33383">
    <property type="entry name" value="MEMBRANE PROTEIN INSERTION EFFICIENCY FACTOR-RELATED"/>
    <property type="match status" value="1"/>
</dbReference>
<dbReference type="PANTHER" id="PTHR33383:SF1">
    <property type="entry name" value="MEMBRANE PROTEIN INSERTION EFFICIENCY FACTOR-RELATED"/>
    <property type="match status" value="1"/>
</dbReference>
<dbReference type="Pfam" id="PF01809">
    <property type="entry name" value="YidD"/>
    <property type="match status" value="1"/>
</dbReference>
<dbReference type="SMART" id="SM01234">
    <property type="entry name" value="Haemolytic"/>
    <property type="match status" value="1"/>
</dbReference>
<reference key="1">
    <citation type="journal article" date="2003" name="Proc. Natl. Acad. Sci. U.S.A.">
        <title>Complete genome sequence of Lactobacillus plantarum WCFS1.</title>
        <authorList>
            <person name="Kleerebezem M."/>
            <person name="Boekhorst J."/>
            <person name="van Kranenburg R."/>
            <person name="Molenaar D."/>
            <person name="Kuipers O.P."/>
            <person name="Leer R."/>
            <person name="Tarchini R."/>
            <person name="Peters S.A."/>
            <person name="Sandbrink H.M."/>
            <person name="Fiers M.W.E.J."/>
            <person name="Stiekema W."/>
            <person name="Klein Lankhorst R.M."/>
            <person name="Bron P.A."/>
            <person name="Hoffer S.M."/>
            <person name="Nierop Groot M.N."/>
            <person name="Kerkhoven R."/>
            <person name="De Vries M."/>
            <person name="Ursing B."/>
            <person name="De Vos W.M."/>
            <person name="Siezen R.J."/>
        </authorList>
    </citation>
    <scope>NUCLEOTIDE SEQUENCE [LARGE SCALE GENOMIC DNA]</scope>
    <source>
        <strain>ATCC BAA-793 / NCIMB 8826 / WCFS1</strain>
    </source>
</reference>
<reference key="2">
    <citation type="journal article" date="2012" name="J. Bacteriol.">
        <title>Complete resequencing and reannotation of the Lactobacillus plantarum WCFS1 genome.</title>
        <authorList>
            <person name="Siezen R.J."/>
            <person name="Francke C."/>
            <person name="Renckens B."/>
            <person name="Boekhorst J."/>
            <person name="Wels M."/>
            <person name="Kleerebezem M."/>
            <person name="van Hijum S.A."/>
        </authorList>
    </citation>
    <scope>NUCLEOTIDE SEQUENCE [LARGE SCALE GENOMIC DNA]</scope>
    <scope>GENOME REANNOTATION</scope>
    <source>
        <strain>ATCC BAA-793 / NCIMB 8826 / WCFS1</strain>
    </source>
</reference>
<feature type="chain" id="PRO_0000171833" description="Putative membrane protein insertion efficiency factor">
    <location>
        <begin position="1"/>
        <end position="90"/>
    </location>
</feature>
<feature type="region of interest" description="Disordered" evidence="2">
    <location>
        <begin position="68"/>
        <end position="90"/>
    </location>
</feature>
<feature type="compositionally biased region" description="Basic and acidic residues" evidence="2">
    <location>
        <begin position="79"/>
        <end position="90"/>
    </location>
</feature>
<keyword id="KW-1003">Cell membrane</keyword>
<keyword id="KW-0472">Membrane</keyword>
<keyword id="KW-1185">Reference proteome</keyword>
<sequence>MRRLLMKGIRFYQRAFSAFSPAHCRYYPTCSNYTLEAINRFGAVKGVLMGVARILRCQPLVKGGFDPVPAHFSLRRNPQYKEEDHRGKKR</sequence>
<name>YIDD_LACPL</name>
<organism>
    <name type="scientific">Lactiplantibacillus plantarum (strain ATCC BAA-793 / NCIMB 8826 / WCFS1)</name>
    <name type="common">Lactobacillus plantarum</name>
    <dbReference type="NCBI Taxonomy" id="220668"/>
    <lineage>
        <taxon>Bacteria</taxon>
        <taxon>Bacillati</taxon>
        <taxon>Bacillota</taxon>
        <taxon>Bacilli</taxon>
        <taxon>Lactobacillales</taxon>
        <taxon>Lactobacillaceae</taxon>
        <taxon>Lactiplantibacillus</taxon>
    </lineage>
</organism>
<protein>
    <recommendedName>
        <fullName evidence="1">Putative membrane protein insertion efficiency factor</fullName>
    </recommendedName>
</protein>
<comment type="function">
    <text evidence="1">Could be involved in insertion of integral membrane proteins into the membrane.</text>
</comment>
<comment type="subcellular location">
    <subcellularLocation>
        <location evidence="1">Cell membrane</location>
        <topology evidence="1">Peripheral membrane protein</topology>
        <orientation evidence="1">Cytoplasmic side</orientation>
    </subcellularLocation>
</comment>
<comment type="similarity">
    <text evidence="1">Belongs to the UPF0161 family.</text>
</comment>
<proteinExistence type="inferred from homology"/>